<reference key="1">
    <citation type="journal article" date="1995" name="FEBS Lett.">
        <title>Alcohol dehydrogenase of class I: kiwi liver enzyme, parallel evolution in separate vertebrate lines, and correlation with 12S rRNA patterns.</title>
        <authorList>
            <person name="Hjelmqvist L."/>
            <person name="Metsis M."/>
            <person name="Persson H."/>
            <person name="Hoeoeg J.-O."/>
            <person name="McLennan J."/>
            <person name="Joernvall H."/>
        </authorList>
    </citation>
    <scope>NUCLEOTIDE SEQUENCE [MRNA]</scope>
    <source>
        <tissue>Liver</tissue>
    </source>
</reference>
<reference key="2">
    <citation type="journal article" date="1995" name="FEBS Lett.">
        <title>Multiplicity of N-terminal structures of medium-chain alcohol dehydrogenases. Mass-spectrometric analysis of plant, lower vertebrate and higher vertebrate class I, II, and III forms of the enzyme.</title>
        <authorList>
            <person name="Hjelmqvist L."/>
            <person name="Hackett M."/>
            <person name="Shafqat J."/>
            <person name="Danielsson O."/>
            <person name="Iida J."/>
            <person name="Hendrickson R.C."/>
            <person name="Michel H."/>
            <person name="Shabanowitz J."/>
            <person name="Hunt D.F."/>
            <person name="Joernvall H."/>
        </authorList>
    </citation>
    <scope>PARTIAL PROTEIN SEQUENCE</scope>
    <scope>ACETYLATION AT SER-2</scope>
</reference>
<sequence length="375" mass="39631">MSTAGKVIKCKAAVLWEPKKPFSIEEVEVAPPKAHEVRIKILATGICRSDDHVITGALVRPFPIILGHEAAGVVESVGEGVTSVKPGDKVIPLFVPQCGECSACLSTKGNLCSKNDIGSASGLMPDGTTRFTCKGKAIHHFIGTSTFTEYTVVHETAVAKIAAAAPLEKVCLIGCGFSTGYGAAVQTAKVEPGSTCAVFGLGGVGLSVVMGCKAAGASRIIAIDINKDKFAKAKELGATDCVNPKDFTKPIHEVLMEMTGLGVDYSFEVIGHTETMAAALASCHFNYGVSVILGVPPAAEKISFDPMLLFSGRTWKGSVFGGWKSKDAVPKLVADYMEKKFVLEPLITHTLPFIKINEGFDLLRKGKSIRSVLVF</sequence>
<comment type="catalytic activity">
    <reaction>
        <text>a primary alcohol + NAD(+) = an aldehyde + NADH + H(+)</text>
        <dbReference type="Rhea" id="RHEA:10736"/>
        <dbReference type="ChEBI" id="CHEBI:15378"/>
        <dbReference type="ChEBI" id="CHEBI:15734"/>
        <dbReference type="ChEBI" id="CHEBI:17478"/>
        <dbReference type="ChEBI" id="CHEBI:57540"/>
        <dbReference type="ChEBI" id="CHEBI:57945"/>
        <dbReference type="EC" id="1.1.1.1"/>
    </reaction>
</comment>
<comment type="catalytic activity">
    <reaction>
        <text>a secondary alcohol + NAD(+) = a ketone + NADH + H(+)</text>
        <dbReference type="Rhea" id="RHEA:10740"/>
        <dbReference type="ChEBI" id="CHEBI:15378"/>
        <dbReference type="ChEBI" id="CHEBI:17087"/>
        <dbReference type="ChEBI" id="CHEBI:35681"/>
        <dbReference type="ChEBI" id="CHEBI:57540"/>
        <dbReference type="ChEBI" id="CHEBI:57945"/>
        <dbReference type="EC" id="1.1.1.1"/>
    </reaction>
</comment>
<comment type="cofactor">
    <cofactor evidence="1">
        <name>Zn(2+)</name>
        <dbReference type="ChEBI" id="CHEBI:29105"/>
    </cofactor>
    <text evidence="1">Binds 2 Zn(2+) ions per subunit.</text>
</comment>
<comment type="subunit">
    <text>Homodimer.</text>
</comment>
<comment type="subcellular location">
    <subcellularLocation>
        <location>Cytoplasm</location>
    </subcellularLocation>
</comment>
<comment type="similarity">
    <text evidence="3">Belongs to the zinc-containing alcohol dehydrogenase family. Class-I subfamily.</text>
</comment>
<accession>P49645</accession>
<gene>
    <name type="primary">ADH1</name>
</gene>
<proteinExistence type="evidence at protein level"/>
<name>ADH1_APTAU</name>
<organism>
    <name type="scientific">Apteryx australis</name>
    <name type="common">Southern brown kiwi</name>
    <dbReference type="NCBI Taxonomy" id="8822"/>
    <lineage>
        <taxon>Eukaryota</taxon>
        <taxon>Metazoa</taxon>
        <taxon>Chordata</taxon>
        <taxon>Craniata</taxon>
        <taxon>Vertebrata</taxon>
        <taxon>Euteleostomi</taxon>
        <taxon>Archelosauria</taxon>
        <taxon>Archosauria</taxon>
        <taxon>Dinosauria</taxon>
        <taxon>Saurischia</taxon>
        <taxon>Theropoda</taxon>
        <taxon>Coelurosauria</taxon>
        <taxon>Aves</taxon>
        <taxon>Palaeognathae</taxon>
        <taxon>Apterygiformes</taxon>
        <taxon>Apterygidae</taxon>
        <taxon>Apteryx</taxon>
    </lineage>
</organism>
<dbReference type="EC" id="1.1.1.1"/>
<dbReference type="EMBL" id="S78778">
    <property type="protein sequence ID" value="AAC60755.2"/>
    <property type="molecule type" value="mRNA"/>
</dbReference>
<dbReference type="PIR" id="S66272">
    <property type="entry name" value="S66272"/>
</dbReference>
<dbReference type="SMR" id="P49645"/>
<dbReference type="iPTMnet" id="P49645"/>
<dbReference type="GO" id="GO:0005829">
    <property type="term" value="C:cytosol"/>
    <property type="evidence" value="ECO:0007669"/>
    <property type="project" value="TreeGrafter"/>
</dbReference>
<dbReference type="GO" id="GO:0004745">
    <property type="term" value="F:all-trans-retinol dehydrogenase (NAD+) activity"/>
    <property type="evidence" value="ECO:0007669"/>
    <property type="project" value="TreeGrafter"/>
</dbReference>
<dbReference type="GO" id="GO:0008270">
    <property type="term" value="F:zinc ion binding"/>
    <property type="evidence" value="ECO:0007669"/>
    <property type="project" value="InterPro"/>
</dbReference>
<dbReference type="GO" id="GO:0042573">
    <property type="term" value="P:retinoic acid metabolic process"/>
    <property type="evidence" value="ECO:0007669"/>
    <property type="project" value="TreeGrafter"/>
</dbReference>
<dbReference type="GO" id="GO:0042572">
    <property type="term" value="P:retinol metabolic process"/>
    <property type="evidence" value="ECO:0007669"/>
    <property type="project" value="TreeGrafter"/>
</dbReference>
<dbReference type="CDD" id="cd08299">
    <property type="entry name" value="alcohol_DH_class_I_II_IV"/>
    <property type="match status" value="1"/>
</dbReference>
<dbReference type="FunFam" id="3.40.50.720:FF:001857">
    <property type="entry name" value="Alcohol dehydrogenase class 4 mu/sigma chain"/>
    <property type="match status" value="1"/>
</dbReference>
<dbReference type="FunFam" id="3.90.180.10:FF:000001">
    <property type="entry name" value="S-(hydroxymethyl)glutathione dehydrogenase"/>
    <property type="match status" value="1"/>
</dbReference>
<dbReference type="Gene3D" id="3.90.180.10">
    <property type="entry name" value="Medium-chain alcohol dehydrogenases, catalytic domain"/>
    <property type="match status" value="1"/>
</dbReference>
<dbReference type="Gene3D" id="3.40.50.720">
    <property type="entry name" value="NAD(P)-binding Rossmann-like Domain"/>
    <property type="match status" value="1"/>
</dbReference>
<dbReference type="InterPro" id="IPR013149">
    <property type="entry name" value="ADH-like_C"/>
</dbReference>
<dbReference type="InterPro" id="IPR013154">
    <property type="entry name" value="ADH-like_N"/>
</dbReference>
<dbReference type="InterPro" id="IPR002328">
    <property type="entry name" value="ADH_Zn_CS"/>
</dbReference>
<dbReference type="InterPro" id="IPR011032">
    <property type="entry name" value="GroES-like_sf"/>
</dbReference>
<dbReference type="InterPro" id="IPR036291">
    <property type="entry name" value="NAD(P)-bd_dom_sf"/>
</dbReference>
<dbReference type="InterPro" id="IPR020843">
    <property type="entry name" value="PKS_ER"/>
</dbReference>
<dbReference type="PANTHER" id="PTHR43880">
    <property type="entry name" value="ALCOHOL DEHYDROGENASE"/>
    <property type="match status" value="1"/>
</dbReference>
<dbReference type="PANTHER" id="PTHR43880:SF1">
    <property type="entry name" value="ALCOHOL DEHYDROGENASE 1A"/>
    <property type="match status" value="1"/>
</dbReference>
<dbReference type="Pfam" id="PF08240">
    <property type="entry name" value="ADH_N"/>
    <property type="match status" value="1"/>
</dbReference>
<dbReference type="Pfam" id="PF00107">
    <property type="entry name" value="ADH_zinc_N"/>
    <property type="match status" value="1"/>
</dbReference>
<dbReference type="SMART" id="SM00829">
    <property type="entry name" value="PKS_ER"/>
    <property type="match status" value="1"/>
</dbReference>
<dbReference type="SUPFAM" id="SSF50129">
    <property type="entry name" value="GroES-like"/>
    <property type="match status" value="2"/>
</dbReference>
<dbReference type="SUPFAM" id="SSF51735">
    <property type="entry name" value="NAD(P)-binding Rossmann-fold domains"/>
    <property type="match status" value="1"/>
</dbReference>
<dbReference type="PROSITE" id="PS00059">
    <property type="entry name" value="ADH_ZINC"/>
    <property type="match status" value="1"/>
</dbReference>
<evidence type="ECO:0000250" key="1"/>
<evidence type="ECO:0000269" key="2">
    <source>
    </source>
</evidence>
<evidence type="ECO:0000305" key="3"/>
<keyword id="KW-0007">Acetylation</keyword>
<keyword id="KW-0963">Cytoplasm</keyword>
<keyword id="KW-0903">Direct protein sequencing</keyword>
<keyword id="KW-0479">Metal-binding</keyword>
<keyword id="KW-0520">NAD</keyword>
<keyword id="KW-0560">Oxidoreductase</keyword>
<keyword id="KW-0862">Zinc</keyword>
<feature type="initiator methionine" description="Removed" evidence="1">
    <location>
        <position position="1"/>
    </location>
</feature>
<feature type="chain" id="PRO_0000160671" description="Alcohol dehydrogenase 1">
    <location>
        <begin position="2"/>
        <end position="375"/>
    </location>
</feature>
<feature type="binding site" evidence="1">
    <location>
        <position position="47"/>
    </location>
    <ligand>
        <name>Zn(2+)</name>
        <dbReference type="ChEBI" id="CHEBI:29105"/>
        <label>1</label>
        <note>catalytic</note>
    </ligand>
</feature>
<feature type="binding site" evidence="1">
    <location>
        <position position="68"/>
    </location>
    <ligand>
        <name>Zn(2+)</name>
        <dbReference type="ChEBI" id="CHEBI:29105"/>
        <label>1</label>
        <note>catalytic</note>
    </ligand>
</feature>
<feature type="binding site" evidence="1">
    <location>
        <position position="98"/>
    </location>
    <ligand>
        <name>Zn(2+)</name>
        <dbReference type="ChEBI" id="CHEBI:29105"/>
        <label>2</label>
    </ligand>
</feature>
<feature type="binding site" evidence="1">
    <location>
        <position position="101"/>
    </location>
    <ligand>
        <name>Zn(2+)</name>
        <dbReference type="ChEBI" id="CHEBI:29105"/>
        <label>2</label>
    </ligand>
</feature>
<feature type="binding site" evidence="1">
    <location>
        <position position="104"/>
    </location>
    <ligand>
        <name>Zn(2+)</name>
        <dbReference type="ChEBI" id="CHEBI:29105"/>
        <label>2</label>
    </ligand>
</feature>
<feature type="binding site" evidence="1">
    <location>
        <position position="112"/>
    </location>
    <ligand>
        <name>Zn(2+)</name>
        <dbReference type="ChEBI" id="CHEBI:29105"/>
        <label>2</label>
    </ligand>
</feature>
<feature type="binding site" evidence="1">
    <location>
        <position position="175"/>
    </location>
    <ligand>
        <name>Zn(2+)</name>
        <dbReference type="ChEBI" id="CHEBI:29105"/>
        <label>1</label>
        <note>catalytic</note>
    </ligand>
</feature>
<feature type="binding site" evidence="1">
    <location>
        <begin position="200"/>
        <end position="205"/>
    </location>
    <ligand>
        <name>NAD(+)</name>
        <dbReference type="ChEBI" id="CHEBI:57540"/>
    </ligand>
</feature>
<feature type="binding site" evidence="1">
    <location>
        <position position="224"/>
    </location>
    <ligand>
        <name>NAD(+)</name>
        <dbReference type="ChEBI" id="CHEBI:57540"/>
    </ligand>
</feature>
<feature type="binding site" evidence="1">
    <location>
        <position position="229"/>
    </location>
    <ligand>
        <name>NAD(+)</name>
        <dbReference type="ChEBI" id="CHEBI:57540"/>
    </ligand>
</feature>
<feature type="binding site" evidence="1">
    <location>
        <begin position="293"/>
        <end position="295"/>
    </location>
    <ligand>
        <name>NAD(+)</name>
        <dbReference type="ChEBI" id="CHEBI:57540"/>
    </ligand>
</feature>
<feature type="binding site" evidence="1">
    <location>
        <position position="370"/>
    </location>
    <ligand>
        <name>NAD(+)</name>
        <dbReference type="ChEBI" id="CHEBI:57540"/>
    </ligand>
</feature>
<feature type="modified residue" description="N-acetylserine" evidence="2">
    <location>
        <position position="2"/>
    </location>
</feature>
<protein>
    <recommendedName>
        <fullName>Alcohol dehydrogenase 1</fullName>
        <ecNumber>1.1.1.1</ecNumber>
    </recommendedName>
    <alternativeName>
        <fullName>Alcohol dehydrogenase I</fullName>
    </alternativeName>
</protein>